<gene>
    <name type="primary">CGR1</name>
    <name type="ordered locus">YGL029W</name>
</gene>
<name>CGR1_YEAST</name>
<feature type="chain" id="PRO_0000202773" description="rRNA-processing protein CGR1">
    <location>
        <begin position="1"/>
        <end position="120"/>
    </location>
</feature>
<feature type="region of interest" description="Disordered" evidence="2">
    <location>
        <begin position="1"/>
        <end position="26"/>
    </location>
</feature>
<feature type="region of interest" description="Disordered" evidence="2">
    <location>
        <begin position="81"/>
        <end position="120"/>
    </location>
</feature>
<feature type="coiled-coil region" evidence="1">
    <location>
        <begin position="47"/>
        <end position="106"/>
    </location>
</feature>
<feature type="compositionally biased region" description="Basic and acidic residues" evidence="2">
    <location>
        <begin position="81"/>
        <end position="96"/>
    </location>
</feature>
<feature type="compositionally biased region" description="Basic residues" evidence="2">
    <location>
        <begin position="97"/>
        <end position="113"/>
    </location>
</feature>
<reference key="1">
    <citation type="journal article" date="1997" name="Nature">
        <title>The nucleotide sequence of Saccharomyces cerevisiae chromosome VII.</title>
        <authorList>
            <person name="Tettelin H."/>
            <person name="Agostoni-Carbone M.L."/>
            <person name="Albermann K."/>
            <person name="Albers M."/>
            <person name="Arroyo J."/>
            <person name="Backes U."/>
            <person name="Barreiros T."/>
            <person name="Bertani I."/>
            <person name="Bjourson A.J."/>
            <person name="Brueckner M."/>
            <person name="Bruschi C.V."/>
            <person name="Carignani G."/>
            <person name="Castagnoli L."/>
            <person name="Cerdan E."/>
            <person name="Clemente M.L."/>
            <person name="Coblenz A."/>
            <person name="Coglievina M."/>
            <person name="Coissac E."/>
            <person name="Defoor E."/>
            <person name="Del Bino S."/>
            <person name="Delius H."/>
            <person name="Delneri D."/>
            <person name="de Wergifosse P."/>
            <person name="Dujon B."/>
            <person name="Durand P."/>
            <person name="Entian K.-D."/>
            <person name="Eraso P."/>
            <person name="Escribano V."/>
            <person name="Fabiani L."/>
            <person name="Fartmann B."/>
            <person name="Feroli F."/>
            <person name="Feuermann M."/>
            <person name="Frontali L."/>
            <person name="Garcia-Gonzalez M."/>
            <person name="Garcia-Saez M.I."/>
            <person name="Goffeau A."/>
            <person name="Guerreiro P."/>
            <person name="Hani J."/>
            <person name="Hansen M."/>
            <person name="Hebling U."/>
            <person name="Hernandez K."/>
            <person name="Heumann K."/>
            <person name="Hilger F."/>
            <person name="Hofmann B."/>
            <person name="Indge K.J."/>
            <person name="James C.M."/>
            <person name="Klima R."/>
            <person name="Koetter P."/>
            <person name="Kramer B."/>
            <person name="Kramer W."/>
            <person name="Lauquin G."/>
            <person name="Leuther H."/>
            <person name="Louis E.J."/>
            <person name="Maillier E."/>
            <person name="Marconi A."/>
            <person name="Martegani E."/>
            <person name="Mazon M.J."/>
            <person name="Mazzoni C."/>
            <person name="McReynolds A.D.K."/>
            <person name="Melchioretto P."/>
            <person name="Mewes H.-W."/>
            <person name="Minenkova O."/>
            <person name="Mueller-Auer S."/>
            <person name="Nawrocki A."/>
            <person name="Netter P."/>
            <person name="Neu R."/>
            <person name="Nombela C."/>
            <person name="Oliver S.G."/>
            <person name="Panzeri L."/>
            <person name="Paoluzi S."/>
            <person name="Plevani P."/>
            <person name="Portetelle D."/>
            <person name="Portillo F."/>
            <person name="Potier S."/>
            <person name="Purnelle B."/>
            <person name="Rieger M."/>
            <person name="Riles L."/>
            <person name="Rinaldi T."/>
            <person name="Robben J."/>
            <person name="Rodrigues-Pousada C."/>
            <person name="Rodriguez-Belmonte E."/>
            <person name="Rodriguez-Torres A.M."/>
            <person name="Rose M."/>
            <person name="Ruzzi M."/>
            <person name="Saliola M."/>
            <person name="Sanchez-Perez M."/>
            <person name="Schaefer B."/>
            <person name="Schaefer M."/>
            <person name="Scharfe M."/>
            <person name="Schmidheini T."/>
            <person name="Schreer A."/>
            <person name="Skala J."/>
            <person name="Souciet J.-L."/>
            <person name="Steensma H.Y."/>
            <person name="Talla E."/>
            <person name="Thierry A."/>
            <person name="Vandenbol M."/>
            <person name="van der Aart Q.J.M."/>
            <person name="Van Dyck L."/>
            <person name="Vanoni M."/>
            <person name="Verhasselt P."/>
            <person name="Voet M."/>
            <person name="Volckaert G."/>
            <person name="Wambutt R."/>
            <person name="Watson M.D."/>
            <person name="Weber N."/>
            <person name="Wedler E."/>
            <person name="Wedler H."/>
            <person name="Wipfli P."/>
            <person name="Wolf K."/>
            <person name="Wright L.F."/>
            <person name="Zaccaria P."/>
            <person name="Zimmermann M."/>
            <person name="Zollner A."/>
            <person name="Kleine K."/>
        </authorList>
    </citation>
    <scope>NUCLEOTIDE SEQUENCE [LARGE SCALE GENOMIC DNA]</scope>
    <source>
        <strain>ATCC 204508 / S288c</strain>
    </source>
</reference>
<reference key="2">
    <citation type="journal article" date="2014" name="G3 (Bethesda)">
        <title>The reference genome sequence of Saccharomyces cerevisiae: Then and now.</title>
        <authorList>
            <person name="Engel S.R."/>
            <person name="Dietrich F.S."/>
            <person name="Fisk D.G."/>
            <person name="Binkley G."/>
            <person name="Balakrishnan R."/>
            <person name="Costanzo M.C."/>
            <person name="Dwight S.S."/>
            <person name="Hitz B.C."/>
            <person name="Karra K."/>
            <person name="Nash R.S."/>
            <person name="Weng S."/>
            <person name="Wong E.D."/>
            <person name="Lloyd P."/>
            <person name="Skrzypek M.S."/>
            <person name="Miyasato S.R."/>
            <person name="Simison M."/>
            <person name="Cherry J.M."/>
        </authorList>
    </citation>
    <scope>GENOME REANNOTATION</scope>
    <source>
        <strain>ATCC 204508 / S288c</strain>
    </source>
</reference>
<reference key="3">
    <citation type="journal article" date="2007" name="Genome Res.">
        <title>Approaching a complete repository of sequence-verified protein-encoding clones for Saccharomyces cerevisiae.</title>
        <authorList>
            <person name="Hu Y."/>
            <person name="Rolfs A."/>
            <person name="Bhullar B."/>
            <person name="Murthy T.V.S."/>
            <person name="Zhu C."/>
            <person name="Berger M.F."/>
            <person name="Camargo A.A."/>
            <person name="Kelley F."/>
            <person name="McCarron S."/>
            <person name="Jepson D."/>
            <person name="Richardson A."/>
            <person name="Raphael J."/>
            <person name="Moreira D."/>
            <person name="Taycher E."/>
            <person name="Zuo D."/>
            <person name="Mohr S."/>
            <person name="Kane M.F."/>
            <person name="Williamson J."/>
            <person name="Simpson A.J.G."/>
            <person name="Bulyk M.L."/>
            <person name="Harlow E."/>
            <person name="Marsischky G."/>
            <person name="Kolodner R.D."/>
            <person name="LaBaer J."/>
        </authorList>
    </citation>
    <scope>NUCLEOTIDE SEQUENCE [GENOMIC DNA]</scope>
    <source>
        <strain>ATCC 204508 / S288c</strain>
    </source>
</reference>
<reference key="4">
    <citation type="journal article" date="2001" name="Curr. Microbiol.">
        <title>Cgr1p, a novel nucleolar protein encoded by Saccharomyces cerevisiae orf YGL0292w.</title>
        <authorList>
            <person name="Sun J."/>
            <person name="McFarland M."/>
            <person name="Boettner D."/>
            <person name="Panepinto J."/>
            <person name="Rhodes J.C."/>
            <person name="Askew D.S."/>
        </authorList>
    </citation>
    <scope>FUNCTION</scope>
    <scope>SUBCELLULAR LOCATION</scope>
</reference>
<reference key="5">
    <citation type="journal article" date="2002" name="Microbiology">
        <title>Identification of a role for Saccharomyces cerevisiae Cgr1p in pre-rRNA processing and 60S ribosome subunit synthesis.</title>
        <authorList>
            <person name="Moy T.I."/>
            <person name="Boettner D."/>
            <person name="Rhodes J.C."/>
            <person name="Silver P.A."/>
            <person name="Askew D.S."/>
        </authorList>
    </citation>
    <scope>FUNCTION</scope>
</reference>
<reference key="6">
    <citation type="journal article" date="2003" name="Nature">
        <title>Global analysis of protein localization in budding yeast.</title>
        <authorList>
            <person name="Huh W.-K."/>
            <person name="Falvo J.V."/>
            <person name="Gerke L.C."/>
            <person name="Carroll A.S."/>
            <person name="Howson R.W."/>
            <person name="Weissman J.S."/>
            <person name="O'Shea E.K."/>
        </authorList>
    </citation>
    <scope>SUBCELLULAR LOCATION [LARGE SCALE ANALYSIS]</scope>
</reference>
<reference key="7">
    <citation type="journal article" date="2003" name="Nature">
        <title>Global analysis of protein expression in yeast.</title>
        <authorList>
            <person name="Ghaemmaghami S."/>
            <person name="Huh W.-K."/>
            <person name="Bower K."/>
            <person name="Howson R.W."/>
            <person name="Belle A."/>
            <person name="Dephoure N."/>
            <person name="O'Shea E.K."/>
            <person name="Weissman J.S."/>
        </authorList>
    </citation>
    <scope>LEVEL OF PROTEIN EXPRESSION [LARGE SCALE ANALYSIS]</scope>
</reference>
<reference key="8">
    <citation type="journal article" date="2005" name="Mutat. Res.">
        <title>Differentiating mechanisms of toxicity using global gene expression analysis in Saccharomyces cerevisiae.</title>
        <authorList>
            <person name="Caba E."/>
            <person name="Dickinson D.A."/>
            <person name="Warnes G.R."/>
            <person name="Aubrecht J."/>
        </authorList>
    </citation>
    <scope>INDUCTION</scope>
</reference>
<reference key="9">
    <citation type="journal article" date="2006" name="Yeast">
        <title>The budding yeast rRNA and ribosome biosynthesis (RRB) regulon contains over 200 genes.</title>
        <authorList>
            <person name="Wade C.H."/>
            <person name="Umbarger M.A."/>
            <person name="McAlear M.A."/>
        </authorList>
    </citation>
    <scope>FUNCTION</scope>
</reference>
<accession>P53188</accession>
<accession>D6VUA9</accession>
<comment type="function">
    <text evidence="3 4 8">Involved in nucleolar integrity and required for processing of the pre-rRNA for the 60S ribosome subunit.</text>
</comment>
<comment type="interaction">
    <interactant intactId="EBI-23731">
        <id>P53188</id>
    </interactant>
    <interactant intactId="EBI-6289">
        <id>P36049</id>
        <label>EBP2</label>
    </interactant>
    <organismsDiffer>false</organismsDiffer>
    <experiments>3</experiments>
</comment>
<comment type="interaction">
    <interactant intactId="EBI-23731">
        <id>P53188</id>
    </interactant>
    <interactant intactId="EBI-22681">
        <id>P40078</id>
        <label>NSA2</label>
    </interactant>
    <organismsDiffer>false</organismsDiffer>
    <experiments>5</experiments>
</comment>
<comment type="interaction">
    <interactant intactId="EBI-23731">
        <id>P53188</id>
    </interactant>
    <interactant intactId="EBI-22449">
        <id>P40010</id>
        <label>NUG1</label>
    </interactant>
    <organismsDiffer>false</organismsDiffer>
    <experiments>3</experiments>
</comment>
<comment type="subcellular location">
    <subcellularLocation>
        <location evidence="3 5">Nucleus</location>
        <location evidence="3 5">Nucleolus</location>
    </subcellularLocation>
</comment>
<comment type="induction">
    <text evidence="7">In response to cytotoxic stress but not genotoxic stress.</text>
</comment>
<comment type="miscellaneous">
    <text evidence="6">Present with 2340 molecules/cell in log phase SD medium.</text>
</comment>
<comment type="similarity">
    <text evidence="9">Belongs to the CGR1 family.</text>
</comment>
<sequence>MVNETGESQKAAKGTPVSGKVWKAEKTPLRAKSRVVKNKKLTSWELKKQKRLEDKQFKERLKALKDEKEEARQAKITMLKERREKKEENERYERLAAKMHAKKVERMRRREKRNKALKER</sequence>
<dbReference type="EMBL" id="Z72551">
    <property type="protein sequence ID" value="CAA96730.1"/>
    <property type="molecule type" value="Genomic_DNA"/>
</dbReference>
<dbReference type="EMBL" id="AY558480">
    <property type="protein sequence ID" value="AAS56806.1"/>
    <property type="molecule type" value="Genomic_DNA"/>
</dbReference>
<dbReference type="EMBL" id="BK006941">
    <property type="protein sequence ID" value="DAA08070.1"/>
    <property type="molecule type" value="Genomic_DNA"/>
</dbReference>
<dbReference type="PIR" id="S64031">
    <property type="entry name" value="S64031"/>
</dbReference>
<dbReference type="RefSeq" id="NP_011486.1">
    <property type="nucleotide sequence ID" value="NM_001180894.1"/>
</dbReference>
<dbReference type="PDB" id="3JCT">
    <property type="method" value="EM"/>
    <property type="resolution" value="3.08 A"/>
    <property type="chains" value="5=1-120"/>
</dbReference>
<dbReference type="PDB" id="6FT6">
    <property type="method" value="EM"/>
    <property type="resolution" value="3.90 A"/>
    <property type="chains" value="5=1-120"/>
</dbReference>
<dbReference type="PDB" id="6M62">
    <property type="method" value="EM"/>
    <property type="resolution" value="3.20 A"/>
    <property type="chains" value="5=1-120"/>
</dbReference>
<dbReference type="PDB" id="6YLG">
    <property type="method" value="EM"/>
    <property type="resolution" value="3.00 A"/>
    <property type="chains" value="5=1-120"/>
</dbReference>
<dbReference type="PDB" id="6YLH">
    <property type="method" value="EM"/>
    <property type="resolution" value="3.10 A"/>
    <property type="chains" value="5=1-120"/>
</dbReference>
<dbReference type="PDB" id="7OH3">
    <property type="method" value="EM"/>
    <property type="resolution" value="3.40 A"/>
    <property type="chains" value="5=1-120"/>
</dbReference>
<dbReference type="PDB" id="7OHQ">
    <property type="method" value="EM"/>
    <property type="resolution" value="3.10 A"/>
    <property type="chains" value="5=1-120"/>
</dbReference>
<dbReference type="PDB" id="7UOO">
    <property type="method" value="EM"/>
    <property type="resolution" value="2.34 A"/>
    <property type="chains" value="5=1-120"/>
</dbReference>
<dbReference type="PDB" id="7UQB">
    <property type="method" value="EM"/>
    <property type="resolution" value="2.43 A"/>
    <property type="chains" value="5=1-120"/>
</dbReference>
<dbReference type="PDB" id="7UQZ">
    <property type="method" value="EM"/>
    <property type="resolution" value="2.44 A"/>
    <property type="chains" value="5=1-114"/>
</dbReference>
<dbReference type="PDB" id="7V08">
    <property type="method" value="EM"/>
    <property type="resolution" value="2.36 A"/>
    <property type="chains" value="5=1-120"/>
</dbReference>
<dbReference type="PDBsum" id="3JCT"/>
<dbReference type="PDBsum" id="6FT6"/>
<dbReference type="PDBsum" id="6M62"/>
<dbReference type="PDBsum" id="6YLG"/>
<dbReference type="PDBsum" id="6YLH"/>
<dbReference type="PDBsum" id="7OH3"/>
<dbReference type="PDBsum" id="7OHQ"/>
<dbReference type="PDBsum" id="7UOO"/>
<dbReference type="PDBsum" id="7UQB"/>
<dbReference type="PDBsum" id="7UQZ"/>
<dbReference type="PDBsum" id="7V08"/>
<dbReference type="EMDB" id="EMD-10838"/>
<dbReference type="EMDB" id="EMD-10839"/>
<dbReference type="EMDB" id="EMD-12892"/>
<dbReference type="EMDB" id="EMD-12905"/>
<dbReference type="EMDB" id="EMD-30108"/>
<dbReference type="EMDB" id="EMD-4302"/>
<dbReference type="SMR" id="P53188"/>
<dbReference type="BioGRID" id="33217">
    <property type="interactions" value="325"/>
</dbReference>
<dbReference type="DIP" id="DIP-5450N"/>
<dbReference type="FunCoup" id="P53188">
    <property type="interactions" value="191"/>
</dbReference>
<dbReference type="IntAct" id="P53188">
    <property type="interactions" value="58"/>
</dbReference>
<dbReference type="MINT" id="P53188"/>
<dbReference type="STRING" id="4932.YGL029W"/>
<dbReference type="iPTMnet" id="P53188"/>
<dbReference type="PaxDb" id="4932-YGL029W"/>
<dbReference type="PeptideAtlas" id="P53188"/>
<dbReference type="EnsemblFungi" id="YGL029W_mRNA">
    <property type="protein sequence ID" value="YGL029W"/>
    <property type="gene ID" value="YGL029W"/>
</dbReference>
<dbReference type="GeneID" id="852854"/>
<dbReference type="KEGG" id="sce:YGL029W"/>
<dbReference type="AGR" id="SGD:S000002997"/>
<dbReference type="SGD" id="S000002997">
    <property type="gene designation" value="CGR1"/>
</dbReference>
<dbReference type="VEuPathDB" id="FungiDB:YGL029W"/>
<dbReference type="eggNOG" id="ENOG502S7VB">
    <property type="taxonomic scope" value="Eukaryota"/>
</dbReference>
<dbReference type="HOGENOM" id="CLU_125051_0_1_1"/>
<dbReference type="InParanoid" id="P53188"/>
<dbReference type="OMA" id="NGKQWHD"/>
<dbReference type="OrthoDB" id="3942380at2759"/>
<dbReference type="BioCyc" id="YEAST:G3O-30545-MONOMER"/>
<dbReference type="BioGRID-ORCS" id="852854">
    <property type="hits" value="3 hits in 10 CRISPR screens"/>
</dbReference>
<dbReference type="PRO" id="PR:P53188"/>
<dbReference type="Proteomes" id="UP000002311">
    <property type="component" value="Chromosome VII"/>
</dbReference>
<dbReference type="RNAct" id="P53188">
    <property type="molecule type" value="protein"/>
</dbReference>
<dbReference type="GO" id="GO:0005730">
    <property type="term" value="C:nucleolus"/>
    <property type="evidence" value="ECO:0000314"/>
    <property type="project" value="SGD"/>
</dbReference>
<dbReference type="GO" id="GO:0005634">
    <property type="term" value="C:nucleus"/>
    <property type="evidence" value="ECO:0007005"/>
    <property type="project" value="SGD"/>
</dbReference>
<dbReference type="GO" id="GO:0030687">
    <property type="term" value="C:preribosome, large subunit precursor"/>
    <property type="evidence" value="ECO:0007005"/>
    <property type="project" value="SGD"/>
</dbReference>
<dbReference type="GO" id="GO:0042254">
    <property type="term" value="P:ribosome biogenesis"/>
    <property type="evidence" value="ECO:0000315"/>
    <property type="project" value="SGD"/>
</dbReference>
<dbReference type="GO" id="GO:0006364">
    <property type="term" value="P:rRNA processing"/>
    <property type="evidence" value="ECO:0000314"/>
    <property type="project" value="SGD"/>
</dbReference>
<dbReference type="InterPro" id="IPR005579">
    <property type="entry name" value="Cgr1-like"/>
</dbReference>
<dbReference type="Pfam" id="PF03879">
    <property type="entry name" value="Cgr1"/>
    <property type="match status" value="1"/>
</dbReference>
<proteinExistence type="evidence at protein level"/>
<evidence type="ECO:0000255" key="1"/>
<evidence type="ECO:0000256" key="2">
    <source>
        <dbReference type="SAM" id="MobiDB-lite"/>
    </source>
</evidence>
<evidence type="ECO:0000269" key="3">
    <source>
    </source>
</evidence>
<evidence type="ECO:0000269" key="4">
    <source>
    </source>
</evidence>
<evidence type="ECO:0000269" key="5">
    <source>
    </source>
</evidence>
<evidence type="ECO:0000269" key="6">
    <source>
    </source>
</evidence>
<evidence type="ECO:0000269" key="7">
    <source>
    </source>
</evidence>
<evidence type="ECO:0000269" key="8">
    <source>
    </source>
</evidence>
<evidence type="ECO:0000305" key="9"/>
<keyword id="KW-0002">3D-structure</keyword>
<keyword id="KW-0175">Coiled coil</keyword>
<keyword id="KW-0539">Nucleus</keyword>
<keyword id="KW-1185">Reference proteome</keyword>
<keyword id="KW-0690">Ribosome biogenesis</keyword>
<keyword id="KW-0698">rRNA processing</keyword>
<protein>
    <recommendedName>
        <fullName>rRNA-processing protein CGR1</fullName>
    </recommendedName>
    <alternativeName>
        <fullName>Coiled-coil growth-regulated protein 1</fullName>
    </alternativeName>
</protein>
<organism>
    <name type="scientific">Saccharomyces cerevisiae (strain ATCC 204508 / S288c)</name>
    <name type="common">Baker's yeast</name>
    <dbReference type="NCBI Taxonomy" id="559292"/>
    <lineage>
        <taxon>Eukaryota</taxon>
        <taxon>Fungi</taxon>
        <taxon>Dikarya</taxon>
        <taxon>Ascomycota</taxon>
        <taxon>Saccharomycotina</taxon>
        <taxon>Saccharomycetes</taxon>
        <taxon>Saccharomycetales</taxon>
        <taxon>Saccharomycetaceae</taxon>
        <taxon>Saccharomyces</taxon>
    </lineage>
</organism>